<accession>B5XXH2</accession>
<sequence length="213" mass="23568">MRSNYIVIEGLEGAGKTTARQLVVETLQSAGIHDMVFTREPGGTVLAEKLRSLVLDIQSTGDEVINDKAEVLMFYAARVQLVETVIKPALARGQWVIGDRHDLSTQAYQGGGRGIDRTMLATLRDAVLGDFRPNLTLYLDVTPEVGLQRARARGELDRIEQESMNFFNRTRARYLELAAADPSIRTVDATQPLDAVARDIRATIAQWMAEQPA</sequence>
<reference key="1">
    <citation type="journal article" date="2008" name="PLoS Genet.">
        <title>Complete genome sequence of the N2-fixing broad host range endophyte Klebsiella pneumoniae 342 and virulence predictions verified in mice.</title>
        <authorList>
            <person name="Fouts D.E."/>
            <person name="Tyler H.L."/>
            <person name="DeBoy R.T."/>
            <person name="Daugherty S."/>
            <person name="Ren Q."/>
            <person name="Badger J.H."/>
            <person name="Durkin A.S."/>
            <person name="Huot H."/>
            <person name="Shrivastava S."/>
            <person name="Kothari S."/>
            <person name="Dodson R.J."/>
            <person name="Mohamoud Y."/>
            <person name="Khouri H."/>
            <person name="Roesch L.F.W."/>
            <person name="Krogfelt K.A."/>
            <person name="Struve C."/>
            <person name="Triplett E.W."/>
            <person name="Methe B.A."/>
        </authorList>
    </citation>
    <scope>NUCLEOTIDE SEQUENCE [LARGE SCALE GENOMIC DNA]</scope>
    <source>
        <strain>342</strain>
    </source>
</reference>
<feature type="chain" id="PRO_1000097405" description="Thymidylate kinase">
    <location>
        <begin position="1"/>
        <end position="213"/>
    </location>
</feature>
<feature type="binding site" evidence="1">
    <location>
        <begin position="10"/>
        <end position="17"/>
    </location>
    <ligand>
        <name>ATP</name>
        <dbReference type="ChEBI" id="CHEBI:30616"/>
    </ligand>
</feature>
<gene>
    <name evidence="1" type="primary">tmk</name>
    <name type="ordered locus">KPK_3460</name>
</gene>
<comment type="function">
    <text evidence="1">Phosphorylation of dTMP to form dTDP in both de novo and salvage pathways of dTTP synthesis.</text>
</comment>
<comment type="catalytic activity">
    <reaction evidence="1">
        <text>dTMP + ATP = dTDP + ADP</text>
        <dbReference type="Rhea" id="RHEA:13517"/>
        <dbReference type="ChEBI" id="CHEBI:30616"/>
        <dbReference type="ChEBI" id="CHEBI:58369"/>
        <dbReference type="ChEBI" id="CHEBI:63528"/>
        <dbReference type="ChEBI" id="CHEBI:456216"/>
        <dbReference type="EC" id="2.7.4.9"/>
    </reaction>
</comment>
<comment type="similarity">
    <text evidence="1">Belongs to the thymidylate kinase family.</text>
</comment>
<organism>
    <name type="scientific">Klebsiella pneumoniae (strain 342)</name>
    <dbReference type="NCBI Taxonomy" id="507522"/>
    <lineage>
        <taxon>Bacteria</taxon>
        <taxon>Pseudomonadati</taxon>
        <taxon>Pseudomonadota</taxon>
        <taxon>Gammaproteobacteria</taxon>
        <taxon>Enterobacterales</taxon>
        <taxon>Enterobacteriaceae</taxon>
        <taxon>Klebsiella/Raoultella group</taxon>
        <taxon>Klebsiella</taxon>
        <taxon>Klebsiella pneumoniae complex</taxon>
    </lineage>
</organism>
<proteinExistence type="inferred from homology"/>
<dbReference type="EC" id="2.7.4.9" evidence="1"/>
<dbReference type="EMBL" id="CP000964">
    <property type="protein sequence ID" value="ACI10347.1"/>
    <property type="molecule type" value="Genomic_DNA"/>
</dbReference>
<dbReference type="SMR" id="B5XXH2"/>
<dbReference type="KEGG" id="kpe:KPK_3460"/>
<dbReference type="HOGENOM" id="CLU_049131_0_2_6"/>
<dbReference type="Proteomes" id="UP000001734">
    <property type="component" value="Chromosome"/>
</dbReference>
<dbReference type="GO" id="GO:0005829">
    <property type="term" value="C:cytosol"/>
    <property type="evidence" value="ECO:0007669"/>
    <property type="project" value="TreeGrafter"/>
</dbReference>
<dbReference type="GO" id="GO:0005524">
    <property type="term" value="F:ATP binding"/>
    <property type="evidence" value="ECO:0007669"/>
    <property type="project" value="UniProtKB-UniRule"/>
</dbReference>
<dbReference type="GO" id="GO:0004798">
    <property type="term" value="F:dTMP kinase activity"/>
    <property type="evidence" value="ECO:0007669"/>
    <property type="project" value="UniProtKB-UniRule"/>
</dbReference>
<dbReference type="GO" id="GO:0006233">
    <property type="term" value="P:dTDP biosynthetic process"/>
    <property type="evidence" value="ECO:0007669"/>
    <property type="project" value="InterPro"/>
</dbReference>
<dbReference type="GO" id="GO:0006235">
    <property type="term" value="P:dTTP biosynthetic process"/>
    <property type="evidence" value="ECO:0007669"/>
    <property type="project" value="UniProtKB-UniRule"/>
</dbReference>
<dbReference type="GO" id="GO:0006227">
    <property type="term" value="P:dUDP biosynthetic process"/>
    <property type="evidence" value="ECO:0007669"/>
    <property type="project" value="TreeGrafter"/>
</dbReference>
<dbReference type="CDD" id="cd01672">
    <property type="entry name" value="TMPK"/>
    <property type="match status" value="1"/>
</dbReference>
<dbReference type="FunFam" id="3.40.50.300:FF:000321">
    <property type="entry name" value="Thymidylate kinase"/>
    <property type="match status" value="1"/>
</dbReference>
<dbReference type="Gene3D" id="3.40.50.300">
    <property type="entry name" value="P-loop containing nucleotide triphosphate hydrolases"/>
    <property type="match status" value="1"/>
</dbReference>
<dbReference type="HAMAP" id="MF_00165">
    <property type="entry name" value="Thymidylate_kinase"/>
    <property type="match status" value="1"/>
</dbReference>
<dbReference type="InterPro" id="IPR027417">
    <property type="entry name" value="P-loop_NTPase"/>
</dbReference>
<dbReference type="InterPro" id="IPR039430">
    <property type="entry name" value="Thymidylate_kin-like_dom"/>
</dbReference>
<dbReference type="InterPro" id="IPR018095">
    <property type="entry name" value="Thymidylate_kin_CS"/>
</dbReference>
<dbReference type="InterPro" id="IPR018094">
    <property type="entry name" value="Thymidylate_kinase"/>
</dbReference>
<dbReference type="NCBIfam" id="TIGR00041">
    <property type="entry name" value="DTMP_kinase"/>
    <property type="match status" value="1"/>
</dbReference>
<dbReference type="PANTHER" id="PTHR10344">
    <property type="entry name" value="THYMIDYLATE KINASE"/>
    <property type="match status" value="1"/>
</dbReference>
<dbReference type="PANTHER" id="PTHR10344:SF4">
    <property type="entry name" value="UMP-CMP KINASE 2, MITOCHONDRIAL"/>
    <property type="match status" value="1"/>
</dbReference>
<dbReference type="Pfam" id="PF02223">
    <property type="entry name" value="Thymidylate_kin"/>
    <property type="match status" value="1"/>
</dbReference>
<dbReference type="SUPFAM" id="SSF52540">
    <property type="entry name" value="P-loop containing nucleoside triphosphate hydrolases"/>
    <property type="match status" value="1"/>
</dbReference>
<dbReference type="PROSITE" id="PS01331">
    <property type="entry name" value="THYMIDYLATE_KINASE"/>
    <property type="match status" value="1"/>
</dbReference>
<keyword id="KW-0067">ATP-binding</keyword>
<keyword id="KW-0418">Kinase</keyword>
<keyword id="KW-0545">Nucleotide biosynthesis</keyword>
<keyword id="KW-0547">Nucleotide-binding</keyword>
<keyword id="KW-0808">Transferase</keyword>
<protein>
    <recommendedName>
        <fullName evidence="1">Thymidylate kinase</fullName>
        <ecNumber evidence="1">2.7.4.9</ecNumber>
    </recommendedName>
    <alternativeName>
        <fullName evidence="1">dTMP kinase</fullName>
    </alternativeName>
</protein>
<name>KTHY_KLEP3</name>
<evidence type="ECO:0000255" key="1">
    <source>
        <dbReference type="HAMAP-Rule" id="MF_00165"/>
    </source>
</evidence>